<accession>A9WSR4</accession>
<name>RL362_RENSM</name>
<keyword id="KW-1185">Reference proteome</keyword>
<keyword id="KW-0687">Ribonucleoprotein</keyword>
<keyword id="KW-0689">Ribosomal protein</keyword>
<comment type="similarity">
    <text evidence="1">Belongs to the bacterial ribosomal protein bL36 family.</text>
</comment>
<organism>
    <name type="scientific">Renibacterium salmoninarum (strain ATCC 33209 / DSM 20767 / JCM 11484 / NBRC 15589 / NCIMB 2235)</name>
    <dbReference type="NCBI Taxonomy" id="288705"/>
    <lineage>
        <taxon>Bacteria</taxon>
        <taxon>Bacillati</taxon>
        <taxon>Actinomycetota</taxon>
        <taxon>Actinomycetes</taxon>
        <taxon>Micrococcales</taxon>
        <taxon>Micrococcaceae</taxon>
        <taxon>Renibacterium</taxon>
    </lineage>
</organism>
<proteinExistence type="inferred from homology"/>
<feature type="chain" id="PRO_0000344709" description="Large ribosomal subunit protein bL36B">
    <location>
        <begin position="1"/>
        <end position="37"/>
    </location>
</feature>
<protein>
    <recommendedName>
        <fullName evidence="1">Large ribosomal subunit protein bL36B</fullName>
    </recommendedName>
    <alternativeName>
        <fullName evidence="2">50S ribosomal protein L36 2</fullName>
    </alternativeName>
</protein>
<evidence type="ECO:0000255" key="1">
    <source>
        <dbReference type="HAMAP-Rule" id="MF_00251"/>
    </source>
</evidence>
<evidence type="ECO:0000305" key="2"/>
<reference key="1">
    <citation type="journal article" date="2008" name="J. Bacteriol.">
        <title>Genome sequence of the fish pathogen Renibacterium salmoninarum suggests reductive evolution away from an environmental Arthrobacter ancestor.</title>
        <authorList>
            <person name="Wiens G.D."/>
            <person name="Rockey D.D."/>
            <person name="Wu Z."/>
            <person name="Chang J."/>
            <person name="Levy R."/>
            <person name="Crane S."/>
            <person name="Chen D.S."/>
            <person name="Capri G.R."/>
            <person name="Burnett J.R."/>
            <person name="Sudheesh P.S."/>
            <person name="Schipma M.J."/>
            <person name="Burd H."/>
            <person name="Bhattacharyya A."/>
            <person name="Rhodes L.D."/>
            <person name="Kaul R."/>
            <person name="Strom M.S."/>
        </authorList>
    </citation>
    <scope>NUCLEOTIDE SEQUENCE [LARGE SCALE GENOMIC DNA]</scope>
    <source>
        <strain>ATCC 33209 / DSM 20767 / JCM 11484 / NBRC 15589 / NCIMB 2235</strain>
    </source>
</reference>
<sequence>MKVKPSVKQICDKCKVIRRNGRVMVICENPRHKQRQG</sequence>
<gene>
    <name evidence="1" type="primary">rpmJ2</name>
    <name type="ordered locus">RSal33209_2120</name>
</gene>
<dbReference type="EMBL" id="CP000910">
    <property type="protein sequence ID" value="ABY23852.1"/>
    <property type="molecule type" value="Genomic_DNA"/>
</dbReference>
<dbReference type="SMR" id="A9WSR4"/>
<dbReference type="STRING" id="288705.RSal33209_2120"/>
<dbReference type="KEGG" id="rsa:RSal33209_2120"/>
<dbReference type="eggNOG" id="COG0257">
    <property type="taxonomic scope" value="Bacteria"/>
</dbReference>
<dbReference type="HOGENOM" id="CLU_135723_6_2_11"/>
<dbReference type="Proteomes" id="UP000002007">
    <property type="component" value="Chromosome"/>
</dbReference>
<dbReference type="GO" id="GO:0005737">
    <property type="term" value="C:cytoplasm"/>
    <property type="evidence" value="ECO:0007669"/>
    <property type="project" value="UniProtKB-ARBA"/>
</dbReference>
<dbReference type="GO" id="GO:1990904">
    <property type="term" value="C:ribonucleoprotein complex"/>
    <property type="evidence" value="ECO:0007669"/>
    <property type="project" value="UniProtKB-KW"/>
</dbReference>
<dbReference type="GO" id="GO:0005840">
    <property type="term" value="C:ribosome"/>
    <property type="evidence" value="ECO:0007669"/>
    <property type="project" value="UniProtKB-KW"/>
</dbReference>
<dbReference type="GO" id="GO:0003735">
    <property type="term" value="F:structural constituent of ribosome"/>
    <property type="evidence" value="ECO:0007669"/>
    <property type="project" value="InterPro"/>
</dbReference>
<dbReference type="GO" id="GO:0006412">
    <property type="term" value="P:translation"/>
    <property type="evidence" value="ECO:0007669"/>
    <property type="project" value="UniProtKB-UniRule"/>
</dbReference>
<dbReference type="HAMAP" id="MF_00251">
    <property type="entry name" value="Ribosomal_bL36"/>
    <property type="match status" value="1"/>
</dbReference>
<dbReference type="InterPro" id="IPR000473">
    <property type="entry name" value="Ribosomal_bL36"/>
</dbReference>
<dbReference type="InterPro" id="IPR035977">
    <property type="entry name" value="Ribosomal_bL36_sp"/>
</dbReference>
<dbReference type="NCBIfam" id="TIGR01022">
    <property type="entry name" value="rpmJ_bact"/>
    <property type="match status" value="1"/>
</dbReference>
<dbReference type="PANTHER" id="PTHR42888">
    <property type="entry name" value="50S RIBOSOMAL PROTEIN L36, CHLOROPLASTIC"/>
    <property type="match status" value="1"/>
</dbReference>
<dbReference type="PANTHER" id="PTHR42888:SF1">
    <property type="entry name" value="LARGE RIBOSOMAL SUBUNIT PROTEIN BL36C"/>
    <property type="match status" value="1"/>
</dbReference>
<dbReference type="Pfam" id="PF00444">
    <property type="entry name" value="Ribosomal_L36"/>
    <property type="match status" value="1"/>
</dbReference>
<dbReference type="SUPFAM" id="SSF57840">
    <property type="entry name" value="Ribosomal protein L36"/>
    <property type="match status" value="1"/>
</dbReference>
<dbReference type="PROSITE" id="PS00828">
    <property type="entry name" value="RIBOSOMAL_L36"/>
    <property type="match status" value="1"/>
</dbReference>